<feature type="signal peptide" evidence="3">
    <location>
        <begin position="1"/>
        <end position="21"/>
    </location>
</feature>
<feature type="chain" id="PRO_0000011974" description="Oviduct-specific glycoprotein">
    <location>
        <begin position="22"/>
        <end position="671"/>
    </location>
</feature>
<feature type="domain" description="GH18" evidence="2">
    <location>
        <begin position="22"/>
        <end position="385"/>
    </location>
</feature>
<feature type="repeat" description="1">
    <location>
        <begin position="490"/>
        <end position="504"/>
    </location>
</feature>
<feature type="repeat" description="2">
    <location>
        <begin position="505"/>
        <end position="519"/>
    </location>
</feature>
<feature type="repeat" description="3">
    <location>
        <begin position="520"/>
        <end position="534"/>
    </location>
</feature>
<feature type="repeat" description="4">
    <location>
        <begin position="535"/>
        <end position="549"/>
    </location>
</feature>
<feature type="repeat" description="5">
    <location>
        <begin position="550"/>
        <end position="564"/>
    </location>
</feature>
<feature type="repeat" description="6">
    <location>
        <begin position="565"/>
        <end position="579"/>
    </location>
</feature>
<feature type="repeat" description="7">
    <location>
        <begin position="580"/>
        <end position="594"/>
    </location>
</feature>
<feature type="repeat" description="8">
    <location>
        <begin position="595"/>
        <end position="609"/>
    </location>
</feature>
<feature type="region of interest" description="8 X 15 AA tandem repeats">
    <location>
        <begin position="490"/>
        <end position="609"/>
    </location>
</feature>
<feature type="binding site" evidence="2">
    <location>
        <begin position="71"/>
        <end position="72"/>
    </location>
    <ligand>
        <name>chitin</name>
        <dbReference type="ChEBI" id="CHEBI:17029"/>
    </ligand>
</feature>
<feature type="binding site" evidence="2">
    <location>
        <begin position="98"/>
        <end position="101"/>
    </location>
    <ligand>
        <name>chitin</name>
        <dbReference type="ChEBI" id="CHEBI:17029"/>
    </ligand>
</feature>
<feature type="binding site" evidence="2">
    <location>
        <position position="142"/>
    </location>
    <ligand>
        <name>chitin</name>
        <dbReference type="ChEBI" id="CHEBI:17029"/>
    </ligand>
</feature>
<feature type="binding site" evidence="2">
    <location>
        <begin position="211"/>
        <end position="214"/>
    </location>
    <ligand>
        <name>chitin</name>
        <dbReference type="ChEBI" id="CHEBI:17029"/>
    </ligand>
</feature>
<feature type="binding site" evidence="2">
    <location>
        <position position="355"/>
    </location>
    <ligand>
        <name>chitin</name>
        <dbReference type="ChEBI" id="CHEBI:17029"/>
    </ligand>
</feature>
<feature type="glycosylation site" description="N-linked (GlcNAc...) asparagine" evidence="1">
    <location>
        <position position="402"/>
    </location>
</feature>
<feature type="glycosylation site" description="N-linked (GlcNAc...) asparagine" evidence="1">
    <location>
        <position position="511"/>
    </location>
</feature>
<feature type="glycosylation site" description="N-linked (GlcNAc...) asparagine" evidence="1">
    <location>
        <position position="526"/>
    </location>
</feature>
<feature type="glycosylation site" description="N-linked (GlcNAc...) asparagine" evidence="1">
    <location>
        <position position="541"/>
    </location>
</feature>
<feature type="glycosylation site" description="N-linked (GlcNAc...) asparagine" evidence="1">
    <location>
        <position position="556"/>
    </location>
</feature>
<feature type="glycosylation site" description="N-linked (GlcNAc...) asparagine" evidence="1">
    <location>
        <position position="571"/>
    </location>
</feature>
<feature type="glycosylation site" description="N-linked (GlcNAc...) asparagine" evidence="1">
    <location>
        <position position="586"/>
    </location>
</feature>
<feature type="disulfide bond" evidence="2">
    <location>
        <begin position="26"/>
        <end position="51"/>
    </location>
</feature>
<feature type="sequence conflict" description="In Ref. 5; AA sequence." evidence="4" ref="5">
    <original>C</original>
    <variation>A</variation>
    <location>
        <position position="26"/>
    </location>
</feature>
<feature type="sequence conflict" description="In Ref. 5; AA sequence." evidence="4" ref="5">
    <original>H</original>
    <variation>I</variation>
    <location>
        <position position="33"/>
    </location>
</feature>
<feature type="sequence conflict" description="In Ref. 2, 3 and 4." evidence="4" ref="2 3 4">
    <original>V</original>
    <variation>A</variation>
    <location>
        <position position="413"/>
    </location>
</feature>
<feature type="sequence conflict" description="In Ref. 2, 3 and 4." evidence="4" ref="2 3 4">
    <location>
        <begin position="531"/>
        <end position="545"/>
    </location>
</feature>
<evidence type="ECO:0000255" key="1"/>
<evidence type="ECO:0000255" key="2">
    <source>
        <dbReference type="PROSITE-ProRule" id="PRU01258"/>
    </source>
</evidence>
<evidence type="ECO:0000269" key="3">
    <source>
    </source>
</evidence>
<evidence type="ECO:0000305" key="4"/>
<protein>
    <recommendedName>
        <fullName>Oviduct-specific glycoprotein</fullName>
    </recommendedName>
    <alternativeName>
        <fullName>Estrogen-dependent oviduct protein</fullName>
    </alternativeName>
    <alternativeName>
        <fullName>Oviductal glycoprotein</fullName>
    </alternativeName>
    <alternativeName>
        <fullName>Oviductin</fullName>
    </alternativeName>
    <alternativeName>
        <fullName>ZP-0</fullName>
    </alternativeName>
</protein>
<proteinExistence type="evidence at protein level"/>
<keyword id="KW-0968">Cytoplasmic vesicle</keyword>
<keyword id="KW-0903">Direct protein sequencing</keyword>
<keyword id="KW-1015">Disulfide bond</keyword>
<keyword id="KW-0278">Fertilization</keyword>
<keyword id="KW-0325">Glycoprotein</keyword>
<keyword id="KW-1185">Reference proteome</keyword>
<keyword id="KW-0677">Repeat</keyword>
<keyword id="KW-0732">Signal</keyword>
<organism>
    <name type="scientific">Mesocricetus auratus</name>
    <name type="common">Golden hamster</name>
    <dbReference type="NCBI Taxonomy" id="10036"/>
    <lineage>
        <taxon>Eukaryota</taxon>
        <taxon>Metazoa</taxon>
        <taxon>Chordata</taxon>
        <taxon>Craniata</taxon>
        <taxon>Vertebrata</taxon>
        <taxon>Euteleostomi</taxon>
        <taxon>Mammalia</taxon>
        <taxon>Eutheria</taxon>
        <taxon>Euarchontoglires</taxon>
        <taxon>Glires</taxon>
        <taxon>Rodentia</taxon>
        <taxon>Myomorpha</taxon>
        <taxon>Muroidea</taxon>
        <taxon>Cricetidae</taxon>
        <taxon>Cricetinae</taxon>
        <taxon>Mesocricetus</taxon>
    </lineage>
</organism>
<dbReference type="EMBL" id="D32218">
    <property type="protein sequence ID" value="BAA06977.1"/>
    <property type="molecule type" value="mRNA"/>
</dbReference>
<dbReference type="EMBL" id="AF026552">
    <property type="protein sequence ID" value="AAC04276.2"/>
    <property type="molecule type" value="Genomic_DNA"/>
</dbReference>
<dbReference type="EMBL" id="U15048">
    <property type="protein sequence ID" value="AAC53584.2"/>
    <property type="molecule type" value="mRNA"/>
</dbReference>
<dbReference type="RefSeq" id="NP_001268266.1">
    <property type="nucleotide sequence ID" value="NM_001281337.1"/>
</dbReference>
<dbReference type="SMR" id="Q60557"/>
<dbReference type="CAZy" id="GH18">
    <property type="family name" value="Glycoside Hydrolase Family 18"/>
</dbReference>
<dbReference type="GlyCosmos" id="Q60557">
    <property type="glycosylation" value="7 sites, No reported glycans"/>
</dbReference>
<dbReference type="GeneID" id="101833736"/>
<dbReference type="KEGG" id="maua:101833736"/>
<dbReference type="CTD" id="5016"/>
<dbReference type="eggNOG" id="KOG2806">
    <property type="taxonomic scope" value="Eukaryota"/>
</dbReference>
<dbReference type="OrthoDB" id="76388at2759"/>
<dbReference type="Proteomes" id="UP000189706">
    <property type="component" value="Unplaced"/>
</dbReference>
<dbReference type="GO" id="GO:0005576">
    <property type="term" value="C:extracellular region"/>
    <property type="evidence" value="ECO:0007669"/>
    <property type="project" value="TreeGrafter"/>
</dbReference>
<dbReference type="GO" id="GO:0030133">
    <property type="term" value="C:transport vesicle"/>
    <property type="evidence" value="ECO:0007669"/>
    <property type="project" value="UniProtKB-SubCell"/>
</dbReference>
<dbReference type="GO" id="GO:0008061">
    <property type="term" value="F:chitin binding"/>
    <property type="evidence" value="ECO:0007669"/>
    <property type="project" value="InterPro"/>
</dbReference>
<dbReference type="GO" id="GO:0004568">
    <property type="term" value="F:chitinase activity"/>
    <property type="evidence" value="ECO:0007669"/>
    <property type="project" value="TreeGrafter"/>
</dbReference>
<dbReference type="GO" id="GO:0005975">
    <property type="term" value="P:carbohydrate metabolic process"/>
    <property type="evidence" value="ECO:0007669"/>
    <property type="project" value="InterPro"/>
</dbReference>
<dbReference type="GO" id="GO:0006032">
    <property type="term" value="P:chitin catabolic process"/>
    <property type="evidence" value="ECO:0007669"/>
    <property type="project" value="TreeGrafter"/>
</dbReference>
<dbReference type="GO" id="GO:0007338">
    <property type="term" value="P:single fertilization"/>
    <property type="evidence" value="ECO:0007669"/>
    <property type="project" value="UniProtKB-KW"/>
</dbReference>
<dbReference type="CDD" id="cd02872">
    <property type="entry name" value="GH18_chitolectin_chitotriosidase"/>
    <property type="match status" value="1"/>
</dbReference>
<dbReference type="FunFam" id="3.20.20.80:FF:000007">
    <property type="entry name" value="Acidic mammalian chitinase"/>
    <property type="match status" value="1"/>
</dbReference>
<dbReference type="FunFam" id="3.10.50.10:FF:000001">
    <property type="entry name" value="Chitinase 3-like 1"/>
    <property type="match status" value="1"/>
</dbReference>
<dbReference type="Gene3D" id="3.10.50.10">
    <property type="match status" value="1"/>
</dbReference>
<dbReference type="Gene3D" id="3.20.20.80">
    <property type="entry name" value="Glycosidases"/>
    <property type="match status" value="1"/>
</dbReference>
<dbReference type="InterPro" id="IPR011583">
    <property type="entry name" value="Chitinase_II/V-like_cat"/>
</dbReference>
<dbReference type="InterPro" id="IPR029070">
    <property type="entry name" value="Chitinase_insertion_sf"/>
</dbReference>
<dbReference type="InterPro" id="IPR001223">
    <property type="entry name" value="Glyco_hydro18_cat"/>
</dbReference>
<dbReference type="InterPro" id="IPR017853">
    <property type="entry name" value="Glycoside_hydrolase_SF"/>
</dbReference>
<dbReference type="InterPro" id="IPR050314">
    <property type="entry name" value="Glycosyl_Hydrlase_18"/>
</dbReference>
<dbReference type="PANTHER" id="PTHR11177">
    <property type="entry name" value="CHITINASE"/>
    <property type="match status" value="1"/>
</dbReference>
<dbReference type="PANTHER" id="PTHR11177:SF385">
    <property type="entry name" value="OVIDUCT-SPECIFIC GLYCOPROTEIN"/>
    <property type="match status" value="1"/>
</dbReference>
<dbReference type="Pfam" id="PF00704">
    <property type="entry name" value="Glyco_hydro_18"/>
    <property type="match status" value="1"/>
</dbReference>
<dbReference type="SMART" id="SM00636">
    <property type="entry name" value="Glyco_18"/>
    <property type="match status" value="1"/>
</dbReference>
<dbReference type="SUPFAM" id="SSF51445">
    <property type="entry name" value="(Trans)glycosidases"/>
    <property type="match status" value="1"/>
</dbReference>
<dbReference type="SUPFAM" id="SSF54556">
    <property type="entry name" value="Chitinase insertion domain"/>
    <property type="match status" value="1"/>
</dbReference>
<dbReference type="PROSITE" id="PS51910">
    <property type="entry name" value="GH18_2"/>
    <property type="match status" value="1"/>
</dbReference>
<reference key="1">
    <citation type="journal article" date="1995" name="Biol. Reprod.">
        <title>Molecular characterization of a hamster oviduct-specific glycoprotein.</title>
        <authorList>
            <person name="Suzuki K."/>
            <person name="Sendai Y."/>
            <person name="Onuma T."/>
            <person name="Hoshi H."/>
            <person name="Hiroi M."/>
            <person name="Araki Y."/>
        </authorList>
    </citation>
    <scope>NUCLEOTIDE SEQUENCE [MRNA]</scope>
    <scope>PARTIAL PROTEIN SEQUENCE</scope>
    <source>
        <tissue>Oviduct</tissue>
    </source>
</reference>
<reference key="2">
    <citation type="journal article" date="2000" name="Mol. Reprod. Dev.">
        <title>Organization of a gene coding for an oviduct-specific glycoprotein (oviductin) in the hamster.</title>
        <authorList>
            <person name="Merlen Y."/>
            <person name="Bleau G."/>
        </authorList>
    </citation>
    <scope>NUCLEOTIDE SEQUENCE [GENOMIC DNA]</scope>
    <source>
        <tissue>Kidney</tissue>
    </source>
</reference>
<reference key="3">
    <citation type="submission" date="2003-07" db="EMBL/GenBank/DDBJ databases">
        <authorList>
            <person name="Paquette Y."/>
        </authorList>
    </citation>
    <scope>NUCLEOTIDE SEQUENCE</scope>
    <scope>SEQUENCE REVISION</scope>
</reference>
<reference key="4">
    <citation type="journal article" date="1995" name="Mol. Reprod. Dev.">
        <title>Allelic polymorphism in the hamster oviductin gene is due to a variable number of mucin-like tandem repeats.</title>
        <authorList>
            <person name="Paquette Y."/>
            <person name="Merlen Y."/>
            <person name="Malette B."/>
            <person name="Bleau G."/>
        </authorList>
    </citation>
    <scope>NUCLEOTIDE SEQUENCE [MRNA] OF 22-671</scope>
    <source>
        <tissue>Oviduct</tissue>
    </source>
</reference>
<reference key="5">
    <citation type="journal article" date="1993" name="Biochem. J.">
        <title>Biochemical characterization of hamster oviductin as a sulphated zona pellucida-binding glycoprotein.</title>
        <authorList>
            <person name="Malette B."/>
            <person name="Bleau G."/>
        </authorList>
    </citation>
    <scope>PROTEIN SEQUENCE OF 22-39</scope>
</reference>
<gene>
    <name type="primary">OVGP1</name>
    <name type="synonym">OGP</name>
</gene>
<accession>Q60557</accession>
<accession>Q60526</accession>
<comment type="function">
    <text>Binds to oocyte zona pellucida in vivo. May play a role in the fertilization process and/or early embryonic development. Might act as a protective secretion influencing the first steps of the reproductive process necessary for the normal triggering of fertilization and early embryonic development.</text>
</comment>
<comment type="subcellular location">
    <subcellularLocation>
        <location>Cytoplasmic vesicle</location>
        <location>Secretory vesicle</location>
    </subcellularLocation>
    <text>Secretory granules.</text>
</comment>
<comment type="tissue specificity">
    <text>Oviduct.</text>
</comment>
<comment type="PTM">
    <text>Highly O-glycosylated and also N-glycosylated.</text>
</comment>
<comment type="similarity">
    <text evidence="4">Belongs to the glycosyl hydrolase 18 family.</text>
</comment>
<sequence>MGRLLLWVGLVLLMKPNDGTAYKLVCYFTNWAHSRPVPASILPRDLDPFLCTHLIFAFASMSNNQIVANNLQDEKILYPEFNKLKERNRALKTLLSVGGWNFGTSRFTTMLSTLASREKFIGSVVSFLRTHGFDGLDLFFLYPGLRGSPINDRWNFLFLIEELQFAFEKEALLTQRPRLLLSAAVSGIPYIIQTSYDVHLLGRRLDFINVLSYDLHGSWEKSTGHNSPLFSLPEDPKSSAFAMNYWRNLGAPADKLLMGFPAYGRTFHLLRESKNGLQAASMGPASPGKYTKQAGFLAYYEVCSFIQRAEKHWIDHQYVPYAYKGKEWVGYDDAVSFSYKAMFVKKEHFGGAMVWTLDMDDVRGTFCGNGPFPLVHILNELLVRAEFNSTPLPQFWFTLPVNSSGPGSESLPVTEELTTDTVKILPPGGEAMATEVHRKYEKVTTIPNGGFVTPAGTTSPTTHAVALERNAMAPGAKTTTSLDLLSETMTGMTVTVQTQTAGRETMTTVGNQSVTPGGETMTTVGNQSVTPGGETVTTVGNQSVTPGGETMTTVGNQSVTPGGETVTIVGNKSVTPVGETVTIVGNKSVTPGGQTTATVGSQSVTPPGMDTTLVYLQTMTLSEKGTSSKKAVVLEKVTVPPREISVMPNEQNTALNRENLIAEVESYSQDG</sequence>
<name>OVGP1_MESAU</name>